<reference key="1">
    <citation type="journal article" date="2005" name="Science">
        <title>The transcriptional landscape of the mammalian genome.</title>
        <authorList>
            <person name="Carninci P."/>
            <person name="Kasukawa T."/>
            <person name="Katayama S."/>
            <person name="Gough J."/>
            <person name="Frith M.C."/>
            <person name="Maeda N."/>
            <person name="Oyama R."/>
            <person name="Ravasi T."/>
            <person name="Lenhard B."/>
            <person name="Wells C."/>
            <person name="Kodzius R."/>
            <person name="Shimokawa K."/>
            <person name="Bajic V.B."/>
            <person name="Brenner S.E."/>
            <person name="Batalov S."/>
            <person name="Forrest A.R."/>
            <person name="Zavolan M."/>
            <person name="Davis M.J."/>
            <person name="Wilming L.G."/>
            <person name="Aidinis V."/>
            <person name="Allen J.E."/>
            <person name="Ambesi-Impiombato A."/>
            <person name="Apweiler R."/>
            <person name="Aturaliya R.N."/>
            <person name="Bailey T.L."/>
            <person name="Bansal M."/>
            <person name="Baxter L."/>
            <person name="Beisel K.W."/>
            <person name="Bersano T."/>
            <person name="Bono H."/>
            <person name="Chalk A.M."/>
            <person name="Chiu K.P."/>
            <person name="Choudhary V."/>
            <person name="Christoffels A."/>
            <person name="Clutterbuck D.R."/>
            <person name="Crowe M.L."/>
            <person name="Dalla E."/>
            <person name="Dalrymple B.P."/>
            <person name="de Bono B."/>
            <person name="Della Gatta G."/>
            <person name="di Bernardo D."/>
            <person name="Down T."/>
            <person name="Engstrom P."/>
            <person name="Fagiolini M."/>
            <person name="Faulkner G."/>
            <person name="Fletcher C.F."/>
            <person name="Fukushima T."/>
            <person name="Furuno M."/>
            <person name="Futaki S."/>
            <person name="Gariboldi M."/>
            <person name="Georgii-Hemming P."/>
            <person name="Gingeras T.R."/>
            <person name="Gojobori T."/>
            <person name="Green R.E."/>
            <person name="Gustincich S."/>
            <person name="Harbers M."/>
            <person name="Hayashi Y."/>
            <person name="Hensch T.K."/>
            <person name="Hirokawa N."/>
            <person name="Hill D."/>
            <person name="Huminiecki L."/>
            <person name="Iacono M."/>
            <person name="Ikeo K."/>
            <person name="Iwama A."/>
            <person name="Ishikawa T."/>
            <person name="Jakt M."/>
            <person name="Kanapin A."/>
            <person name="Katoh M."/>
            <person name="Kawasawa Y."/>
            <person name="Kelso J."/>
            <person name="Kitamura H."/>
            <person name="Kitano H."/>
            <person name="Kollias G."/>
            <person name="Krishnan S.P."/>
            <person name="Kruger A."/>
            <person name="Kummerfeld S.K."/>
            <person name="Kurochkin I.V."/>
            <person name="Lareau L.F."/>
            <person name="Lazarevic D."/>
            <person name="Lipovich L."/>
            <person name="Liu J."/>
            <person name="Liuni S."/>
            <person name="McWilliam S."/>
            <person name="Madan Babu M."/>
            <person name="Madera M."/>
            <person name="Marchionni L."/>
            <person name="Matsuda H."/>
            <person name="Matsuzawa S."/>
            <person name="Miki H."/>
            <person name="Mignone F."/>
            <person name="Miyake S."/>
            <person name="Morris K."/>
            <person name="Mottagui-Tabar S."/>
            <person name="Mulder N."/>
            <person name="Nakano N."/>
            <person name="Nakauchi H."/>
            <person name="Ng P."/>
            <person name="Nilsson R."/>
            <person name="Nishiguchi S."/>
            <person name="Nishikawa S."/>
            <person name="Nori F."/>
            <person name="Ohara O."/>
            <person name="Okazaki Y."/>
            <person name="Orlando V."/>
            <person name="Pang K.C."/>
            <person name="Pavan W.J."/>
            <person name="Pavesi G."/>
            <person name="Pesole G."/>
            <person name="Petrovsky N."/>
            <person name="Piazza S."/>
            <person name="Reed J."/>
            <person name="Reid J.F."/>
            <person name="Ring B.Z."/>
            <person name="Ringwald M."/>
            <person name="Rost B."/>
            <person name="Ruan Y."/>
            <person name="Salzberg S.L."/>
            <person name="Sandelin A."/>
            <person name="Schneider C."/>
            <person name="Schoenbach C."/>
            <person name="Sekiguchi K."/>
            <person name="Semple C.A."/>
            <person name="Seno S."/>
            <person name="Sessa L."/>
            <person name="Sheng Y."/>
            <person name="Shibata Y."/>
            <person name="Shimada H."/>
            <person name="Shimada K."/>
            <person name="Silva D."/>
            <person name="Sinclair B."/>
            <person name="Sperling S."/>
            <person name="Stupka E."/>
            <person name="Sugiura K."/>
            <person name="Sultana R."/>
            <person name="Takenaka Y."/>
            <person name="Taki K."/>
            <person name="Tammoja K."/>
            <person name="Tan S.L."/>
            <person name="Tang S."/>
            <person name="Taylor M.S."/>
            <person name="Tegner J."/>
            <person name="Teichmann S.A."/>
            <person name="Ueda H.R."/>
            <person name="van Nimwegen E."/>
            <person name="Verardo R."/>
            <person name="Wei C.L."/>
            <person name="Yagi K."/>
            <person name="Yamanishi H."/>
            <person name="Zabarovsky E."/>
            <person name="Zhu S."/>
            <person name="Zimmer A."/>
            <person name="Hide W."/>
            <person name="Bult C."/>
            <person name="Grimmond S.M."/>
            <person name="Teasdale R.D."/>
            <person name="Liu E.T."/>
            <person name="Brusic V."/>
            <person name="Quackenbush J."/>
            <person name="Wahlestedt C."/>
            <person name="Mattick J.S."/>
            <person name="Hume D.A."/>
            <person name="Kai C."/>
            <person name="Sasaki D."/>
            <person name="Tomaru Y."/>
            <person name="Fukuda S."/>
            <person name="Kanamori-Katayama M."/>
            <person name="Suzuki M."/>
            <person name="Aoki J."/>
            <person name="Arakawa T."/>
            <person name="Iida J."/>
            <person name="Imamura K."/>
            <person name="Itoh M."/>
            <person name="Kato T."/>
            <person name="Kawaji H."/>
            <person name="Kawagashira N."/>
            <person name="Kawashima T."/>
            <person name="Kojima M."/>
            <person name="Kondo S."/>
            <person name="Konno H."/>
            <person name="Nakano K."/>
            <person name="Ninomiya N."/>
            <person name="Nishio T."/>
            <person name="Okada M."/>
            <person name="Plessy C."/>
            <person name="Shibata K."/>
            <person name="Shiraki T."/>
            <person name="Suzuki S."/>
            <person name="Tagami M."/>
            <person name="Waki K."/>
            <person name="Watahiki A."/>
            <person name="Okamura-Oho Y."/>
            <person name="Suzuki H."/>
            <person name="Kawai J."/>
            <person name="Hayashizaki Y."/>
        </authorList>
    </citation>
    <scope>NUCLEOTIDE SEQUENCE [LARGE SCALE MRNA]</scope>
    <source>
        <strain>C57BL/6J</strain>
        <tissue>Head</tissue>
    </source>
</reference>
<reference key="2">
    <citation type="journal article" date="2009" name="PLoS Biol.">
        <title>Lineage-specific biology revealed by a finished genome assembly of the mouse.</title>
        <authorList>
            <person name="Church D.M."/>
            <person name="Goodstadt L."/>
            <person name="Hillier L.W."/>
            <person name="Zody M.C."/>
            <person name="Goldstein S."/>
            <person name="She X."/>
            <person name="Bult C.J."/>
            <person name="Agarwala R."/>
            <person name="Cherry J.L."/>
            <person name="DiCuccio M."/>
            <person name="Hlavina W."/>
            <person name="Kapustin Y."/>
            <person name="Meric P."/>
            <person name="Maglott D."/>
            <person name="Birtle Z."/>
            <person name="Marques A.C."/>
            <person name="Graves T."/>
            <person name="Zhou S."/>
            <person name="Teague B."/>
            <person name="Potamousis K."/>
            <person name="Churas C."/>
            <person name="Place M."/>
            <person name="Herschleb J."/>
            <person name="Runnheim R."/>
            <person name="Forrest D."/>
            <person name="Amos-Landgraf J."/>
            <person name="Schwartz D.C."/>
            <person name="Cheng Z."/>
            <person name="Lindblad-Toh K."/>
            <person name="Eichler E.E."/>
            <person name="Ponting C.P."/>
        </authorList>
    </citation>
    <scope>NUCLEOTIDE SEQUENCE [LARGE SCALE GENOMIC DNA]</scope>
    <source>
        <strain>C57BL/6J</strain>
    </source>
</reference>
<reference key="3">
    <citation type="submission" date="2005-07" db="EMBL/GenBank/DDBJ databases">
        <authorList>
            <person name="Mural R.J."/>
            <person name="Adams M.D."/>
            <person name="Myers E.W."/>
            <person name="Smith H.O."/>
            <person name="Venter J.C."/>
        </authorList>
    </citation>
    <scope>NUCLEOTIDE SEQUENCE [LARGE SCALE GENOMIC DNA]</scope>
</reference>
<reference key="4">
    <citation type="journal article" date="2004" name="Genome Res.">
        <title>The status, quality, and expansion of the NIH full-length cDNA project: the Mammalian Gene Collection (MGC).</title>
        <authorList>
            <consortium name="The MGC Project Team"/>
        </authorList>
    </citation>
    <scope>NUCLEOTIDE SEQUENCE [LARGE SCALE MRNA]</scope>
    <source>
        <tissue>Brain</tissue>
    </source>
</reference>
<evidence type="ECO:0000250" key="1">
    <source>
        <dbReference type="UniProtKB" id="Q9H6K1"/>
    </source>
</evidence>
<evidence type="ECO:0000256" key="2">
    <source>
        <dbReference type="SAM" id="MobiDB-lite"/>
    </source>
</evidence>
<evidence type="ECO:0000305" key="3"/>
<evidence type="ECO:0000312" key="4">
    <source>
        <dbReference type="MGI" id="MGI:106281"/>
    </source>
</evidence>
<proteinExistence type="evidence at transcript level"/>
<gene>
    <name evidence="4" type="primary">Ilrun</name>
    <name type="synonym">D17Wsu92e</name>
</gene>
<organism>
    <name type="scientific">Mus musculus</name>
    <name type="common">Mouse</name>
    <dbReference type="NCBI Taxonomy" id="10090"/>
    <lineage>
        <taxon>Eukaryota</taxon>
        <taxon>Metazoa</taxon>
        <taxon>Chordata</taxon>
        <taxon>Craniata</taxon>
        <taxon>Vertebrata</taxon>
        <taxon>Euteleostomi</taxon>
        <taxon>Mammalia</taxon>
        <taxon>Eutheria</taxon>
        <taxon>Euarchontoglires</taxon>
        <taxon>Glires</taxon>
        <taxon>Rodentia</taxon>
        <taxon>Myomorpha</taxon>
        <taxon>Muroidea</taxon>
        <taxon>Muridae</taxon>
        <taxon>Murinae</taxon>
        <taxon>Mus</taxon>
        <taxon>Mus</taxon>
    </lineage>
</organism>
<name>ILRUN_MOUSE</name>
<keyword id="KW-0963">Cytoplasm</keyword>
<keyword id="KW-0391">Immunity</keyword>
<keyword id="KW-0399">Innate immunity</keyword>
<keyword id="KW-0539">Nucleus</keyword>
<keyword id="KW-0597">Phosphoprotein</keyword>
<keyword id="KW-1185">Reference proteome</keyword>
<sequence length="291" mass="32082">MEGMDVDLDPELMQKFSCLGTTDKDVLISEFQRLLGFQLNPAGCAFFLDMTNWNLQAAIGAYYDFESPNISVPSMSFVEDVTIGEGESIPPDTQFIKTWRIQNSGAEAWPPGVCLKYVGGDQFGHVNMVMVRSLEPQEIADVSVQMCSPSRAGMYQGQWRMCTATGLYYGDVIWVILSVEVGGLLGVTQQLSSFETEFNTQPHRKVEGNFNPFASPQKNRQSDENNLTDPGGSEFDSISKNTWAPVPEQSEQDQDRLSQSSVNLSPSSPANNLSVVTYSKGLHGPYPFGQS</sequence>
<comment type="function">
    <text evidence="1">Negative regulator of innate antiviral response. Blocks IRF3-dependent cytokine production such as IFNA, IFNB and TNF. Interacts with IRF3 and inhibits IRF3 recruitment to type I IFN promoter sequences while also reducing nuclear levels of the coactivators EP300 and CREBBP.</text>
</comment>
<comment type="subunit">
    <text evidence="1">Interacts with IRF3; the interaction inhibits IRF3 binding to its DNA consensus sequence.</text>
</comment>
<comment type="subcellular location">
    <subcellularLocation>
        <location evidence="1">Cytoplasm</location>
    </subcellularLocation>
    <subcellularLocation>
        <location evidence="1">Nucleus</location>
    </subcellularLocation>
</comment>
<accession>Q3TT38</accession>
<accession>A2RT11</accession>
<protein>
    <recommendedName>
        <fullName>Protein ILRUN</fullName>
    </recommendedName>
</protein>
<dbReference type="EMBL" id="AK161603">
    <property type="protein sequence ID" value="BAE36487.1"/>
    <property type="molecule type" value="mRNA"/>
</dbReference>
<dbReference type="EMBL" id="AC126040">
    <property type="status" value="NOT_ANNOTATED_CDS"/>
    <property type="molecule type" value="Genomic_DNA"/>
</dbReference>
<dbReference type="EMBL" id="AC131799">
    <property type="status" value="NOT_ANNOTATED_CDS"/>
    <property type="molecule type" value="Genomic_DNA"/>
</dbReference>
<dbReference type="EMBL" id="CT009677">
    <property type="status" value="NOT_ANNOTATED_CDS"/>
    <property type="molecule type" value="Genomic_DNA"/>
</dbReference>
<dbReference type="EMBL" id="CH466606">
    <property type="protein sequence ID" value="EDL22550.1"/>
    <property type="molecule type" value="Genomic_DNA"/>
</dbReference>
<dbReference type="EMBL" id="BC132324">
    <property type="protein sequence ID" value="AAI32325.1"/>
    <property type="molecule type" value="mRNA"/>
</dbReference>
<dbReference type="EMBL" id="BC132326">
    <property type="protein sequence ID" value="AAI32327.1"/>
    <property type="molecule type" value="mRNA"/>
</dbReference>
<dbReference type="EMBL" id="BC145403">
    <property type="protein sequence ID" value="AAI45404.1"/>
    <property type="molecule type" value="mRNA"/>
</dbReference>
<dbReference type="CCDS" id="CCDS28569.1"/>
<dbReference type="RefSeq" id="NP_001028451.2">
    <property type="nucleotide sequence ID" value="NM_001033279.3"/>
</dbReference>
<dbReference type="RefSeq" id="NP_001258440.1">
    <property type="nucleotide sequence ID" value="NM_001271511.1"/>
</dbReference>
<dbReference type="SMR" id="Q3TT38"/>
<dbReference type="FunCoup" id="Q3TT38">
    <property type="interactions" value="3319"/>
</dbReference>
<dbReference type="STRING" id="10090.ENSMUSP00000110513"/>
<dbReference type="iPTMnet" id="Q3TT38"/>
<dbReference type="PhosphoSitePlus" id="Q3TT38"/>
<dbReference type="jPOST" id="Q3TT38"/>
<dbReference type="PaxDb" id="10090-ENSMUSP00000110513"/>
<dbReference type="ProteomicsDB" id="281647"/>
<dbReference type="Pumba" id="Q3TT38"/>
<dbReference type="Antibodypedia" id="49290">
    <property type="antibodies" value="64 antibodies from 15 providers"/>
</dbReference>
<dbReference type="Ensembl" id="ENSMUST00000114863.10">
    <property type="protein sequence ID" value="ENSMUSP00000110513.3"/>
    <property type="gene ID" value="ENSMUSG00000056692.14"/>
</dbReference>
<dbReference type="GeneID" id="224647"/>
<dbReference type="KEGG" id="mmu:224647"/>
<dbReference type="UCSC" id="uc008bpq.2">
    <property type="organism name" value="mouse"/>
</dbReference>
<dbReference type="AGR" id="MGI:106281"/>
<dbReference type="CTD" id="64771"/>
<dbReference type="MGI" id="MGI:106281">
    <property type="gene designation" value="Ilrun"/>
</dbReference>
<dbReference type="VEuPathDB" id="HostDB:ENSMUSG00000056692"/>
<dbReference type="eggNOG" id="KOG4351">
    <property type="taxonomic scope" value="Eukaryota"/>
</dbReference>
<dbReference type="GeneTree" id="ENSGT00490000043415"/>
<dbReference type="HOGENOM" id="CLU_076188_1_0_1"/>
<dbReference type="InParanoid" id="Q3TT38"/>
<dbReference type="OMA" id="HWQGSPN"/>
<dbReference type="OrthoDB" id="39212at9989"/>
<dbReference type="TreeFam" id="TF105872"/>
<dbReference type="BioGRID-ORCS" id="224647">
    <property type="hits" value="3 hits in 76 CRISPR screens"/>
</dbReference>
<dbReference type="ChiTaRS" id="D17Wsu92e">
    <property type="organism name" value="mouse"/>
</dbReference>
<dbReference type="PRO" id="PR:Q3TT38"/>
<dbReference type="Proteomes" id="UP000000589">
    <property type="component" value="Chromosome 17"/>
</dbReference>
<dbReference type="RNAct" id="Q3TT38">
    <property type="molecule type" value="protein"/>
</dbReference>
<dbReference type="Bgee" id="ENSMUSG00000056692">
    <property type="expression patterns" value="Expressed in hindlimb stylopod muscle and 250 other cell types or tissues"/>
</dbReference>
<dbReference type="ExpressionAtlas" id="Q3TT38">
    <property type="expression patterns" value="baseline and differential"/>
</dbReference>
<dbReference type="GO" id="GO:0005813">
    <property type="term" value="C:centrosome"/>
    <property type="evidence" value="ECO:0007669"/>
    <property type="project" value="Ensembl"/>
</dbReference>
<dbReference type="GO" id="GO:0005737">
    <property type="term" value="C:cytoplasm"/>
    <property type="evidence" value="ECO:0000250"/>
    <property type="project" value="UniProtKB"/>
</dbReference>
<dbReference type="GO" id="GO:0005829">
    <property type="term" value="C:cytosol"/>
    <property type="evidence" value="ECO:0007669"/>
    <property type="project" value="Ensembl"/>
</dbReference>
<dbReference type="GO" id="GO:0016607">
    <property type="term" value="C:nuclear speck"/>
    <property type="evidence" value="ECO:0007669"/>
    <property type="project" value="Ensembl"/>
</dbReference>
<dbReference type="GO" id="GO:0005634">
    <property type="term" value="C:nucleus"/>
    <property type="evidence" value="ECO:0000250"/>
    <property type="project" value="UniProtKB"/>
</dbReference>
<dbReference type="GO" id="GO:0045087">
    <property type="term" value="P:innate immune response"/>
    <property type="evidence" value="ECO:0007669"/>
    <property type="project" value="UniProtKB-KW"/>
</dbReference>
<dbReference type="GO" id="GO:0050687">
    <property type="term" value="P:negative regulation of defense response to virus"/>
    <property type="evidence" value="ECO:0000250"/>
    <property type="project" value="UniProtKB"/>
</dbReference>
<dbReference type="GO" id="GO:0043392">
    <property type="term" value="P:negative regulation of DNA binding"/>
    <property type="evidence" value="ECO:0000250"/>
    <property type="project" value="UniProtKB"/>
</dbReference>
<dbReference type="GO" id="GO:1900181">
    <property type="term" value="P:negative regulation of protein localization to nucleus"/>
    <property type="evidence" value="ECO:0000250"/>
    <property type="project" value="UniProtKB"/>
</dbReference>
<dbReference type="GO" id="GO:0032720">
    <property type="term" value="P:negative regulation of tumor necrosis factor production"/>
    <property type="evidence" value="ECO:0000250"/>
    <property type="project" value="UniProtKB"/>
</dbReference>
<dbReference type="GO" id="GO:0032480">
    <property type="term" value="P:negative regulation of type I interferon production"/>
    <property type="evidence" value="ECO:0000250"/>
    <property type="project" value="UniProtKB"/>
</dbReference>
<dbReference type="CDD" id="cd14947">
    <property type="entry name" value="NBR1_like"/>
    <property type="match status" value="1"/>
</dbReference>
<dbReference type="CDD" id="cd14349">
    <property type="entry name" value="UBA_CF106"/>
    <property type="match status" value="1"/>
</dbReference>
<dbReference type="FunFam" id="1.10.8.10:FF:000015">
    <property type="entry name" value="Chromosome 6 C6orf106 homolog"/>
    <property type="match status" value="1"/>
</dbReference>
<dbReference type="FunFam" id="2.60.40.10:FF:000289">
    <property type="entry name" value="Chromosome 6 open reading frame 106"/>
    <property type="match status" value="1"/>
</dbReference>
<dbReference type="Gene3D" id="1.10.8.10">
    <property type="entry name" value="DNA helicase RuvA subunit, C-terminal domain"/>
    <property type="match status" value="1"/>
</dbReference>
<dbReference type="Gene3D" id="2.60.40.10">
    <property type="entry name" value="Immunoglobulins"/>
    <property type="match status" value="1"/>
</dbReference>
<dbReference type="InterPro" id="IPR039517">
    <property type="entry name" value="C6orf106_UBA-like"/>
</dbReference>
<dbReference type="InterPro" id="IPR013783">
    <property type="entry name" value="Ig-like_fold"/>
</dbReference>
<dbReference type="InterPro" id="IPR032350">
    <property type="entry name" value="N_BRCA1_central"/>
</dbReference>
<dbReference type="InterPro" id="IPR009060">
    <property type="entry name" value="UBA-like_sf"/>
</dbReference>
<dbReference type="PANTHER" id="PTHR20930">
    <property type="entry name" value="OVARIAN CARCINOMA ANTIGEN CA125-RELATED"/>
    <property type="match status" value="1"/>
</dbReference>
<dbReference type="PANTHER" id="PTHR20930:SF0">
    <property type="entry name" value="PROTEIN ILRUN"/>
    <property type="match status" value="1"/>
</dbReference>
<dbReference type="Pfam" id="PF16158">
    <property type="entry name" value="N_BRCA1_IG"/>
    <property type="match status" value="1"/>
</dbReference>
<dbReference type="Pfam" id="PF14555">
    <property type="entry name" value="UBA_4"/>
    <property type="match status" value="1"/>
</dbReference>
<dbReference type="SUPFAM" id="SSF46934">
    <property type="entry name" value="UBA-like"/>
    <property type="match status" value="1"/>
</dbReference>
<feature type="chain" id="PRO_0000223319" description="Protein ILRUN">
    <location>
        <begin position="1"/>
        <end position="291"/>
    </location>
</feature>
<feature type="region of interest" description="Disordered" evidence="2">
    <location>
        <begin position="199"/>
        <end position="291"/>
    </location>
</feature>
<feature type="compositionally biased region" description="Polar residues" evidence="2">
    <location>
        <begin position="212"/>
        <end position="228"/>
    </location>
</feature>
<feature type="compositionally biased region" description="Low complexity" evidence="2">
    <location>
        <begin position="257"/>
        <end position="276"/>
    </location>
</feature>
<feature type="modified residue" description="Phosphoserine" evidence="1">
    <location>
        <position position="215"/>
    </location>
</feature>
<feature type="modified residue" description="Phosphoserine" evidence="1">
    <location>
        <position position="222"/>
    </location>
</feature>
<feature type="modified residue" description="Phosphoserine" evidence="1">
    <location>
        <position position="265"/>
    </location>
</feature>
<feature type="sequence conflict" description="In Ref. 1; BAE36487." evidence="3" ref="1">
    <original>P</original>
    <variation>T</variation>
    <location>
        <position position="111"/>
    </location>
</feature>
<feature type="sequence conflict" description="In Ref. 1; BAE36487." evidence="3" ref="1">
    <original>P</original>
    <variation>L</variation>
    <location>
        <position position="149"/>
    </location>
</feature>
<feature type="sequence conflict" description="In Ref. 1; BAE36487." evidence="3" ref="1">
    <original>A</original>
    <variation>D</variation>
    <location>
        <position position="164"/>
    </location>
</feature>
<feature type="sequence conflict" description="In Ref. 1; BAE36487." evidence="3" ref="1">
    <original>G</original>
    <variation>E</variation>
    <location>
        <position position="170"/>
    </location>
</feature>
<feature type="sequence conflict" description="In Ref. 1; BAE36487." evidence="3" ref="1">
    <original>R</original>
    <variation>S</variation>
    <location>
        <position position="204"/>
    </location>
</feature>